<feature type="chain" id="PRO_0000172302" description="Large ribosomal subunit protein bL32">
    <location>
        <begin position="1"/>
        <end position="57"/>
    </location>
</feature>
<comment type="similarity">
    <text evidence="1">Belongs to the bacterial ribosomal protein bL32 family.</text>
</comment>
<comment type="sequence caution" evidence="2">
    <conflict type="erroneous initiation">
        <sequence resource="EMBL-CDS" id="AAS42872"/>
    </conflict>
</comment>
<evidence type="ECO:0000255" key="1">
    <source>
        <dbReference type="HAMAP-Rule" id="MF_00340"/>
    </source>
</evidence>
<evidence type="ECO:0000305" key="2"/>
<sequence length="57" mass="6394">MAVPFRRTSKTVKRKRRTHFKLSVPGMVECPSCGEAKLAHRVCKACGTYKGKEVISK</sequence>
<keyword id="KW-0687">Ribonucleoprotein</keyword>
<keyword id="KW-0689">Ribosomal protein</keyword>
<accession>Q732E5</accession>
<protein>
    <recommendedName>
        <fullName evidence="1">Large ribosomal subunit protein bL32</fullName>
    </recommendedName>
    <alternativeName>
        <fullName evidence="2">50S ribosomal protein L32</fullName>
    </alternativeName>
</protein>
<organism>
    <name type="scientific">Bacillus cereus (strain ATCC 10987 / NRS 248)</name>
    <dbReference type="NCBI Taxonomy" id="222523"/>
    <lineage>
        <taxon>Bacteria</taxon>
        <taxon>Bacillati</taxon>
        <taxon>Bacillota</taxon>
        <taxon>Bacilli</taxon>
        <taxon>Bacillales</taxon>
        <taxon>Bacillaceae</taxon>
        <taxon>Bacillus</taxon>
        <taxon>Bacillus cereus group</taxon>
    </lineage>
</organism>
<proteinExistence type="inferred from homology"/>
<reference key="1">
    <citation type="journal article" date="2004" name="Nucleic Acids Res.">
        <title>The genome sequence of Bacillus cereus ATCC 10987 reveals metabolic adaptations and a large plasmid related to Bacillus anthracis pXO1.</title>
        <authorList>
            <person name="Rasko D.A."/>
            <person name="Ravel J."/>
            <person name="Oekstad O.A."/>
            <person name="Helgason E."/>
            <person name="Cer R.Z."/>
            <person name="Jiang L."/>
            <person name="Shores K.A."/>
            <person name="Fouts D.E."/>
            <person name="Tourasse N.J."/>
            <person name="Angiuoli S.V."/>
            <person name="Kolonay J.F."/>
            <person name="Nelson W.C."/>
            <person name="Kolstoe A.-B."/>
            <person name="Fraser C.M."/>
            <person name="Read T.D."/>
        </authorList>
    </citation>
    <scope>NUCLEOTIDE SEQUENCE [LARGE SCALE GENOMIC DNA]</scope>
    <source>
        <strain>ATCC 10987 / NRS 248</strain>
    </source>
</reference>
<dbReference type="EMBL" id="AE017194">
    <property type="protein sequence ID" value="AAS42872.1"/>
    <property type="status" value="ALT_INIT"/>
    <property type="molecule type" value="Genomic_DNA"/>
</dbReference>
<dbReference type="SMR" id="Q732E5"/>
<dbReference type="KEGG" id="bca:BCE_3969"/>
<dbReference type="HOGENOM" id="CLU_129084_1_2_9"/>
<dbReference type="Proteomes" id="UP000002527">
    <property type="component" value="Chromosome"/>
</dbReference>
<dbReference type="GO" id="GO:0015934">
    <property type="term" value="C:large ribosomal subunit"/>
    <property type="evidence" value="ECO:0007669"/>
    <property type="project" value="InterPro"/>
</dbReference>
<dbReference type="GO" id="GO:0003735">
    <property type="term" value="F:structural constituent of ribosome"/>
    <property type="evidence" value="ECO:0007669"/>
    <property type="project" value="InterPro"/>
</dbReference>
<dbReference type="GO" id="GO:0006412">
    <property type="term" value="P:translation"/>
    <property type="evidence" value="ECO:0007669"/>
    <property type="project" value="UniProtKB-UniRule"/>
</dbReference>
<dbReference type="HAMAP" id="MF_00340">
    <property type="entry name" value="Ribosomal_bL32"/>
    <property type="match status" value="1"/>
</dbReference>
<dbReference type="InterPro" id="IPR002677">
    <property type="entry name" value="Ribosomal_bL32"/>
</dbReference>
<dbReference type="InterPro" id="IPR044957">
    <property type="entry name" value="Ribosomal_bL32_bact"/>
</dbReference>
<dbReference type="InterPro" id="IPR011332">
    <property type="entry name" value="Ribosomal_zn-bd"/>
</dbReference>
<dbReference type="NCBIfam" id="TIGR01031">
    <property type="entry name" value="rpmF_bact"/>
    <property type="match status" value="1"/>
</dbReference>
<dbReference type="PANTHER" id="PTHR35534">
    <property type="entry name" value="50S RIBOSOMAL PROTEIN L32"/>
    <property type="match status" value="1"/>
</dbReference>
<dbReference type="PANTHER" id="PTHR35534:SF2">
    <property type="entry name" value="LARGE RIBOSOMAL SUBUNIT PROTEIN BL32"/>
    <property type="match status" value="1"/>
</dbReference>
<dbReference type="Pfam" id="PF01783">
    <property type="entry name" value="Ribosomal_L32p"/>
    <property type="match status" value="1"/>
</dbReference>
<dbReference type="SUPFAM" id="SSF57829">
    <property type="entry name" value="Zn-binding ribosomal proteins"/>
    <property type="match status" value="1"/>
</dbReference>
<name>RL32_BACC1</name>
<gene>
    <name evidence="1" type="primary">rpmF</name>
    <name type="ordered locus">BCE_3969</name>
</gene>